<name>AOFA_BOVIN</name>
<organism>
    <name type="scientific">Bos taurus</name>
    <name type="common">Bovine</name>
    <dbReference type="NCBI Taxonomy" id="9913"/>
    <lineage>
        <taxon>Eukaryota</taxon>
        <taxon>Metazoa</taxon>
        <taxon>Chordata</taxon>
        <taxon>Craniata</taxon>
        <taxon>Vertebrata</taxon>
        <taxon>Euteleostomi</taxon>
        <taxon>Mammalia</taxon>
        <taxon>Eutheria</taxon>
        <taxon>Laurasiatheria</taxon>
        <taxon>Artiodactyla</taxon>
        <taxon>Ruminantia</taxon>
        <taxon>Pecora</taxon>
        <taxon>Bovidae</taxon>
        <taxon>Bovinae</taxon>
        <taxon>Bos</taxon>
    </lineage>
</organism>
<sequence>MESLQKTSDAGQMFDVVVIGGGISGLSAAKLLAEHEVNVLVLEARERVGGRTYTVRNEHVDYVDVGGAYVGPTQNRILRLSKQLGLETYKVNVNERLVHYVKGKTYPFRGAFPPVWNPIAYLDYNNLWRTMDNMGKEIPADAPWEAPHAVEWDKMTMKDLIEKICWTKTARQFASLFVNINVTSEPHEVSALWFLWYVKQCGGTTRIFSITNGGQERKFVGGSGQVSERIMQLLGDRVKLRSPVTYVDQSSENITVETLNRELYECRYVISAIPPTLTAKIHFRPELPSERNQLIQRLPMGAVIKCMMYYKEAFWKKKDYCGCMIIEDEEAPISITLDDTKPDGSLPAIMGFILARKADRLAKVHKDIRKRKICELYAKVLGSQEALHPVHYEEKNWCQEQYSGGCYTAYFPPGIMTQYGRVIRQPVGRIYFAGTETATQWSGYMEGAVEAGERAAREVLNALGKLSAKDIWIQEPEAEDVPAVEITPSFWERNLPSVSGLLKIVGFSTSITALWFVMYRFRLLSRS</sequence>
<evidence type="ECO:0000250" key="1"/>
<evidence type="ECO:0000250" key="2">
    <source>
        <dbReference type="UniProtKB" id="P21396"/>
    </source>
</evidence>
<evidence type="ECO:0000250" key="3">
    <source>
        <dbReference type="UniProtKB" id="P21397"/>
    </source>
</evidence>
<evidence type="ECO:0000305" key="4"/>
<comment type="function">
    <text evidence="2">Catalyzes the oxidative deamination of primary and some secondary amine such as neurotransmitters, with concomitant reduction of oxygen to hydrogen peroxide and has important functions in the metabolism of neuroactive and vasoactive amines in the central nervous system and peripheral tissues. Preferentially oxidizes serotonin. Also catalyzes the oxidative deamination of kynuramine to 3-(2-aminophenyl)-3-oxopropanal that can spontaneously condense to 4-hydroxyquinoline.</text>
</comment>
<comment type="catalytic activity">
    <reaction evidence="2">
        <text>a secondary aliphatic amine + O2 + H2O = a primary amine + an aldehyde + H2O2</text>
        <dbReference type="Rhea" id="RHEA:26414"/>
        <dbReference type="ChEBI" id="CHEBI:15377"/>
        <dbReference type="ChEBI" id="CHEBI:15379"/>
        <dbReference type="ChEBI" id="CHEBI:16240"/>
        <dbReference type="ChEBI" id="CHEBI:17478"/>
        <dbReference type="ChEBI" id="CHEBI:58855"/>
        <dbReference type="ChEBI" id="CHEBI:65296"/>
        <dbReference type="EC" id="1.4.3.4"/>
    </reaction>
</comment>
<comment type="catalytic activity">
    <reaction evidence="2">
        <text>a primary methyl amine + O2 + H2O = an aldehyde + H2O2 + NH4(+)</text>
        <dbReference type="Rhea" id="RHEA:16153"/>
        <dbReference type="ChEBI" id="CHEBI:15377"/>
        <dbReference type="ChEBI" id="CHEBI:15379"/>
        <dbReference type="ChEBI" id="CHEBI:16240"/>
        <dbReference type="ChEBI" id="CHEBI:17478"/>
        <dbReference type="ChEBI" id="CHEBI:28938"/>
        <dbReference type="ChEBI" id="CHEBI:228804"/>
        <dbReference type="EC" id="1.4.3.21"/>
    </reaction>
</comment>
<comment type="catalytic activity">
    <reaction evidence="2">
        <text>(R)-adrenaline + O2 + H2O = (R)-3,4-dihydroxymandelaldehyde + methylamine + H2O2</text>
        <dbReference type="Rhea" id="RHEA:51168"/>
        <dbReference type="ChEBI" id="CHEBI:15377"/>
        <dbReference type="ChEBI" id="CHEBI:15379"/>
        <dbReference type="ChEBI" id="CHEBI:16240"/>
        <dbReference type="ChEBI" id="CHEBI:59338"/>
        <dbReference type="ChEBI" id="CHEBI:71406"/>
        <dbReference type="ChEBI" id="CHEBI:180943"/>
    </reaction>
</comment>
<comment type="catalytic activity">
    <reaction evidence="2">
        <text>dopamine + O2 + H2O = 3,4-dihydroxyphenylacetaldehyde + H2O2 + NH4(+)</text>
        <dbReference type="Rhea" id="RHEA:27946"/>
        <dbReference type="ChEBI" id="CHEBI:15377"/>
        <dbReference type="ChEBI" id="CHEBI:15379"/>
        <dbReference type="ChEBI" id="CHEBI:16240"/>
        <dbReference type="ChEBI" id="CHEBI:27978"/>
        <dbReference type="ChEBI" id="CHEBI:28938"/>
        <dbReference type="ChEBI" id="CHEBI:59905"/>
    </reaction>
</comment>
<comment type="catalytic activity">
    <reaction evidence="2">
        <text>tyramine + O2 + H2O = (4-hydroxyphenyl)acetaldehyde + H2O2 + NH4(+)</text>
        <dbReference type="Rhea" id="RHEA:30591"/>
        <dbReference type="ChEBI" id="CHEBI:15377"/>
        <dbReference type="ChEBI" id="CHEBI:15379"/>
        <dbReference type="ChEBI" id="CHEBI:15621"/>
        <dbReference type="ChEBI" id="CHEBI:16240"/>
        <dbReference type="ChEBI" id="CHEBI:28938"/>
        <dbReference type="ChEBI" id="CHEBI:327995"/>
    </reaction>
</comment>
<comment type="catalytic activity">
    <reaction evidence="2">
        <text>(R)-noradrenaline + O2 + H2O = (R)-3,4-dihydroxymandelaldehyde + H2O2 + NH4(+)</text>
        <dbReference type="Rhea" id="RHEA:69076"/>
        <dbReference type="ChEBI" id="CHEBI:15377"/>
        <dbReference type="ChEBI" id="CHEBI:15379"/>
        <dbReference type="ChEBI" id="CHEBI:16240"/>
        <dbReference type="ChEBI" id="CHEBI:28938"/>
        <dbReference type="ChEBI" id="CHEBI:72587"/>
        <dbReference type="ChEBI" id="CHEBI:180943"/>
    </reaction>
</comment>
<comment type="catalytic activity">
    <reaction evidence="2">
        <text>serotonin + O2 + H2O = (5-hydroxyindol-3-yl)acetaldehyde + H2O2 + NH4(+)</text>
        <dbReference type="Rhea" id="RHEA:69072"/>
        <dbReference type="ChEBI" id="CHEBI:15377"/>
        <dbReference type="ChEBI" id="CHEBI:15379"/>
        <dbReference type="ChEBI" id="CHEBI:16240"/>
        <dbReference type="ChEBI" id="CHEBI:28938"/>
        <dbReference type="ChEBI" id="CHEBI:50157"/>
        <dbReference type="ChEBI" id="CHEBI:350546"/>
    </reaction>
</comment>
<comment type="catalytic activity">
    <reaction evidence="2">
        <text>kynuramine + O2 + H2O = 3-(2-aminophenyl)-3-oxopropanal + H2O2 + NH4(+)</text>
        <dbReference type="Rhea" id="RHEA:59596"/>
        <dbReference type="ChEBI" id="CHEBI:15377"/>
        <dbReference type="ChEBI" id="CHEBI:15379"/>
        <dbReference type="ChEBI" id="CHEBI:16240"/>
        <dbReference type="ChEBI" id="CHEBI:28938"/>
        <dbReference type="ChEBI" id="CHEBI:180898"/>
        <dbReference type="ChEBI" id="CHEBI:180899"/>
    </reaction>
    <physiologicalReaction direction="left-to-right" evidence="2">
        <dbReference type="Rhea" id="RHEA:59597"/>
    </physiologicalReaction>
</comment>
<comment type="catalytic activity">
    <reaction evidence="2">
        <text>tryptamine + O2 + H2O = indole-3-acetaldehyde + H2O2 + NH4(+)</text>
        <dbReference type="Rhea" id="RHEA:59416"/>
        <dbReference type="ChEBI" id="CHEBI:15377"/>
        <dbReference type="ChEBI" id="CHEBI:15379"/>
        <dbReference type="ChEBI" id="CHEBI:16240"/>
        <dbReference type="ChEBI" id="CHEBI:18086"/>
        <dbReference type="ChEBI" id="CHEBI:28938"/>
        <dbReference type="ChEBI" id="CHEBI:57887"/>
    </reaction>
</comment>
<comment type="catalytic activity">
    <reaction evidence="2">
        <text>2-phenylethylamine + O2 + H2O = 2-phenylacetaldehyde + H2O2 + NH4(+)</text>
        <dbReference type="Rhea" id="RHEA:25265"/>
        <dbReference type="ChEBI" id="CHEBI:15377"/>
        <dbReference type="ChEBI" id="CHEBI:15379"/>
        <dbReference type="ChEBI" id="CHEBI:16240"/>
        <dbReference type="ChEBI" id="CHEBI:16424"/>
        <dbReference type="ChEBI" id="CHEBI:28938"/>
        <dbReference type="ChEBI" id="CHEBI:225237"/>
    </reaction>
</comment>
<comment type="cofactor">
    <cofactor evidence="3">
        <name>FAD</name>
        <dbReference type="ChEBI" id="CHEBI:57692"/>
    </cofactor>
</comment>
<comment type="subunit">
    <text evidence="3">Monomer, homo- or heterodimer (containing two subunits of similar size). Each subunit contains a covalently bound flavin. Enzymatically active as monomer (By similarity).</text>
</comment>
<comment type="subcellular location">
    <subcellularLocation>
        <location evidence="2">Mitochondrion outer membrane</location>
        <topology evidence="2">Single-pass type IV membrane protein</topology>
        <orientation evidence="2">Cytoplasmic side</orientation>
    </subcellularLocation>
</comment>
<comment type="similarity">
    <text evidence="4">Belongs to the flavin monoamine oxidase family.</text>
</comment>
<comment type="sequence caution" evidence="4">
    <conflict type="erroneous initiation">
        <sequence resource="EMBL-CDS" id="CAA33633"/>
    </conflict>
</comment>
<keyword id="KW-0007">Acetylation</keyword>
<keyword id="KW-0128">Catecholamine metabolism</keyword>
<keyword id="KW-0274">FAD</keyword>
<keyword id="KW-0285">Flavoprotein</keyword>
<keyword id="KW-0472">Membrane</keyword>
<keyword id="KW-0496">Mitochondrion</keyword>
<keyword id="KW-1000">Mitochondrion outer membrane</keyword>
<keyword id="KW-0531">Neurotransmitter degradation</keyword>
<keyword id="KW-0560">Oxidoreductase</keyword>
<keyword id="KW-0597">Phosphoprotein</keyword>
<keyword id="KW-1185">Reference proteome</keyword>
<keyword id="KW-0812">Transmembrane</keyword>
<keyword id="KW-1133">Transmembrane helix</keyword>
<proteinExistence type="evidence at transcript level"/>
<gene>
    <name evidence="3" type="primary">MAOA</name>
</gene>
<feature type="chain" id="PRO_0000099847" description="Amine oxidase [flavin-containing] A">
    <location>
        <begin position="1"/>
        <end position="527"/>
    </location>
</feature>
<feature type="topological domain" description="Cytoplasmic" evidence="1">
    <location>
        <begin position="1"/>
        <end position="497"/>
    </location>
</feature>
<feature type="transmembrane region" description="Helical; Anchor for type IV membrane protein" evidence="1">
    <location>
        <begin position="498"/>
        <end position="518"/>
    </location>
</feature>
<feature type="topological domain" description="Mitochondrial intermembrane" evidence="1">
    <location>
        <begin position="519"/>
        <end position="527"/>
    </location>
</feature>
<feature type="region of interest" description="Interaction with membrane phospholipid headgroups" evidence="1">
    <location>
        <begin position="520"/>
        <end position="522"/>
    </location>
</feature>
<feature type="site" description="Important for substrate specificity" evidence="1">
    <location>
        <position position="335"/>
    </location>
</feature>
<feature type="site" description="Important for catalytic activity" evidence="1">
    <location>
        <position position="374"/>
    </location>
</feature>
<feature type="modified residue" description="N-acetylmethionine" evidence="3">
    <location>
        <position position="1"/>
    </location>
</feature>
<feature type="modified residue" description="Phosphoserine" evidence="2">
    <location>
        <position position="383"/>
    </location>
</feature>
<feature type="modified residue" description="S-8alpha-FAD cysteine" evidence="3">
    <location>
        <position position="406"/>
    </location>
</feature>
<feature type="sequence conflict" description="In Ref. 1; CAA33632/CAA33633." evidence="4" ref="1">
    <original>L</original>
    <variation>R</variation>
    <location>
        <position position="376"/>
    </location>
</feature>
<accession>P21398</accession>
<accession>Q0IIE7</accession>
<dbReference type="EC" id="1.4.3.21" evidence="2"/>
<dbReference type="EC" id="1.4.3.4" evidence="2"/>
<dbReference type="EMBL" id="X15609">
    <property type="protein sequence ID" value="CAA33632.1"/>
    <property type="molecule type" value="mRNA"/>
</dbReference>
<dbReference type="EMBL" id="X15609">
    <property type="protein sequence ID" value="CAA33633.1"/>
    <property type="status" value="ALT_INIT"/>
    <property type="molecule type" value="mRNA"/>
</dbReference>
<dbReference type="EMBL" id="BC122682">
    <property type="protein sequence ID" value="AAI22683.1"/>
    <property type="molecule type" value="mRNA"/>
</dbReference>
<dbReference type="PIR" id="S03974">
    <property type="entry name" value="S03974"/>
</dbReference>
<dbReference type="RefSeq" id="NP_851357.2">
    <property type="nucleotide sequence ID" value="NM_181014.2"/>
</dbReference>
<dbReference type="SMR" id="P21398"/>
<dbReference type="FunCoup" id="P21398">
    <property type="interactions" value="738"/>
</dbReference>
<dbReference type="STRING" id="9913.ENSBTAP00000021570"/>
<dbReference type="BindingDB" id="P21398"/>
<dbReference type="ChEMBL" id="CHEMBL3254"/>
<dbReference type="DrugCentral" id="P21398"/>
<dbReference type="PaxDb" id="9913-ENSBTAP00000021570"/>
<dbReference type="PeptideAtlas" id="P21398"/>
<dbReference type="GeneID" id="281293"/>
<dbReference type="KEGG" id="bta:281293"/>
<dbReference type="CTD" id="4128"/>
<dbReference type="VEuPathDB" id="HostDB:ENSBTAG00000016206"/>
<dbReference type="eggNOG" id="KOG0029">
    <property type="taxonomic scope" value="Eukaryota"/>
</dbReference>
<dbReference type="HOGENOM" id="CLU_004498_0_1_1"/>
<dbReference type="InParanoid" id="P21398"/>
<dbReference type="OMA" id="EWTRGAY"/>
<dbReference type="OrthoDB" id="7777654at2759"/>
<dbReference type="TreeFam" id="TF313314"/>
<dbReference type="BRENDA" id="1.4.3.4">
    <property type="organism ID" value="908"/>
</dbReference>
<dbReference type="Reactome" id="R-BTA-141333">
    <property type="pathway name" value="Biogenic amines are oxidatively deaminated to aldehydes by MAOA and MAOB"/>
</dbReference>
<dbReference type="Reactome" id="R-BTA-181430">
    <property type="pathway name" value="Norepinephrine Neurotransmitter Release Cycle"/>
</dbReference>
<dbReference type="Reactome" id="R-BTA-379397">
    <property type="pathway name" value="Enzymatic degradation of dopamine by COMT"/>
</dbReference>
<dbReference type="Reactome" id="R-BTA-379398">
    <property type="pathway name" value="Enzymatic degradation of Dopamine by monoamine oxidase"/>
</dbReference>
<dbReference type="Reactome" id="R-BTA-379401">
    <property type="pathway name" value="Dopamine clearance from the synaptic cleft"/>
</dbReference>
<dbReference type="Reactome" id="R-BTA-380612">
    <property type="pathway name" value="Metabolism of serotonin"/>
</dbReference>
<dbReference type="PRO" id="PR:P21398"/>
<dbReference type="Proteomes" id="UP000009136">
    <property type="component" value="Chromosome X"/>
</dbReference>
<dbReference type="Bgee" id="ENSBTAG00000016206">
    <property type="expression patterns" value="Expressed in rumen epithelium and 102 other cell types or tissues"/>
</dbReference>
<dbReference type="GO" id="GO:0005741">
    <property type="term" value="C:mitochondrial outer membrane"/>
    <property type="evidence" value="ECO:0007669"/>
    <property type="project" value="UniProtKB-SubCell"/>
</dbReference>
<dbReference type="GO" id="GO:0005739">
    <property type="term" value="C:mitochondrion"/>
    <property type="evidence" value="ECO:0000318"/>
    <property type="project" value="GO_Central"/>
</dbReference>
<dbReference type="GO" id="GO:0050660">
    <property type="term" value="F:flavin adenine dinucleotide binding"/>
    <property type="evidence" value="ECO:0000318"/>
    <property type="project" value="GO_Central"/>
</dbReference>
<dbReference type="GO" id="GO:0097621">
    <property type="term" value="F:monoamine oxidase activity"/>
    <property type="evidence" value="ECO:0000250"/>
    <property type="project" value="UniProtKB"/>
</dbReference>
<dbReference type="GO" id="GO:0008131">
    <property type="term" value="F:primary methylamine oxidase activity"/>
    <property type="evidence" value="ECO:0000250"/>
    <property type="project" value="UniProtKB"/>
</dbReference>
<dbReference type="GO" id="GO:0006584">
    <property type="term" value="P:catecholamine metabolic process"/>
    <property type="evidence" value="ECO:0007669"/>
    <property type="project" value="UniProtKB-KW"/>
</dbReference>
<dbReference type="FunFam" id="1.10.405.10:FF:000005">
    <property type="entry name" value="Amine oxidase [flavin-containing]"/>
    <property type="match status" value="1"/>
</dbReference>
<dbReference type="Gene3D" id="3.90.660.10">
    <property type="match status" value="2"/>
</dbReference>
<dbReference type="Gene3D" id="6.10.250.130">
    <property type="match status" value="1"/>
</dbReference>
<dbReference type="Gene3D" id="3.50.50.60">
    <property type="entry name" value="FAD/NAD(P)-binding domain"/>
    <property type="match status" value="2"/>
</dbReference>
<dbReference type="InterPro" id="IPR002937">
    <property type="entry name" value="Amino_oxidase"/>
</dbReference>
<dbReference type="InterPro" id="IPR036188">
    <property type="entry name" value="FAD/NAD-bd_sf"/>
</dbReference>
<dbReference type="InterPro" id="IPR001613">
    <property type="entry name" value="Flavin_amine_oxidase"/>
</dbReference>
<dbReference type="InterPro" id="IPR050703">
    <property type="entry name" value="Flavin_MAO"/>
</dbReference>
<dbReference type="PANTHER" id="PTHR43563">
    <property type="entry name" value="AMINE OXIDASE"/>
    <property type="match status" value="1"/>
</dbReference>
<dbReference type="PANTHER" id="PTHR43563:SF11">
    <property type="entry name" value="AMINE OXIDASE [FLAVIN-CONTAINING] A"/>
    <property type="match status" value="1"/>
</dbReference>
<dbReference type="Pfam" id="PF01593">
    <property type="entry name" value="Amino_oxidase"/>
    <property type="match status" value="1"/>
</dbReference>
<dbReference type="PRINTS" id="PR00757">
    <property type="entry name" value="AMINEOXDASEF"/>
</dbReference>
<dbReference type="SUPFAM" id="SSF54373">
    <property type="entry name" value="FAD-linked reductases, C-terminal domain"/>
    <property type="match status" value="1"/>
</dbReference>
<dbReference type="SUPFAM" id="SSF51905">
    <property type="entry name" value="FAD/NAD(P)-binding domain"/>
    <property type="match status" value="1"/>
</dbReference>
<protein>
    <recommendedName>
        <fullName evidence="3">Amine oxidase [flavin-containing] A</fullName>
        <ecNumber evidence="2">1.4.3.21</ecNumber>
        <ecNumber evidence="2">1.4.3.4</ecNumber>
    </recommendedName>
    <alternativeName>
        <fullName>Monoamine oxidase type A</fullName>
        <shortName>MAO-A</shortName>
    </alternativeName>
</protein>
<reference key="1">
    <citation type="journal article" date="1989" name="Biochem. J.">
        <title>The primary structure of bovine monoamine oxidase type A. Comparison with peptide sequences of bovine monoamine oxidase type B and other flavoenzymes.</title>
        <authorList>
            <person name="Powell J.F."/>
            <person name="Hsu Y.-P.P."/>
            <person name="Weyler W."/>
            <person name="Chen S.A."/>
            <person name="Salach J."/>
            <person name="Andrikopoulos K."/>
            <person name="Mallet J."/>
            <person name="Breakefield X.O."/>
        </authorList>
    </citation>
    <scope>NUCLEOTIDE SEQUENCE [MRNA]</scope>
</reference>
<reference key="2">
    <citation type="submission" date="2006-08" db="EMBL/GenBank/DDBJ databases">
        <authorList>
            <consortium name="NIH - Mammalian Gene Collection (MGC) project"/>
        </authorList>
    </citation>
    <scope>NUCLEOTIDE SEQUENCE [LARGE SCALE MRNA]</scope>
    <source>
        <strain>Hereford</strain>
        <tissue>Thalamus</tissue>
    </source>
</reference>